<organism>
    <name type="scientific">Candida glabrata (strain ATCC 2001 / BCRC 20586 / JCM 3761 / NBRC 0622 / NRRL Y-65 / CBS 138)</name>
    <name type="common">Yeast</name>
    <name type="synonym">Nakaseomyces glabratus</name>
    <dbReference type="NCBI Taxonomy" id="284593"/>
    <lineage>
        <taxon>Eukaryota</taxon>
        <taxon>Fungi</taxon>
        <taxon>Dikarya</taxon>
        <taxon>Ascomycota</taxon>
        <taxon>Saccharomycotina</taxon>
        <taxon>Saccharomycetes</taxon>
        <taxon>Saccharomycetales</taxon>
        <taxon>Saccharomycetaceae</taxon>
        <taxon>Nakaseomyces</taxon>
    </lineage>
</organism>
<keyword id="KW-0963">Cytoplasm</keyword>
<keyword id="KW-1185">Reference proteome</keyword>
<keyword id="KW-0687">Ribonucleoprotein</keyword>
<keyword id="KW-0689">Ribosomal protein</keyword>
<evidence type="ECO:0000250" key="1"/>
<evidence type="ECO:0000305" key="2"/>
<accession>Q6FTJ2</accession>
<dbReference type="EMBL" id="CR380953">
    <property type="protein sequence ID" value="CAG59379.1"/>
    <property type="molecule type" value="Genomic_DNA"/>
</dbReference>
<dbReference type="RefSeq" id="XP_446452.1">
    <property type="nucleotide sequence ID" value="XM_446452.1"/>
</dbReference>
<dbReference type="SMR" id="Q6FTJ2"/>
<dbReference type="FunCoup" id="Q6FTJ2">
    <property type="interactions" value="919"/>
</dbReference>
<dbReference type="STRING" id="284593.Q6FTJ2"/>
<dbReference type="EnsemblFungi" id="CAGL0G02079g-T">
    <property type="protein sequence ID" value="CAGL0G02079g-T-p1"/>
    <property type="gene ID" value="CAGL0G02079g"/>
</dbReference>
<dbReference type="KEGG" id="cgr:2888296"/>
<dbReference type="CGD" id="CAL0129309">
    <property type="gene designation" value="CAGL0G02079g"/>
</dbReference>
<dbReference type="VEuPathDB" id="FungiDB:B1J91_G02079g"/>
<dbReference type="VEuPathDB" id="FungiDB:CAGL0G02079g"/>
<dbReference type="eggNOG" id="KOG0746">
    <property type="taxonomic scope" value="Eukaryota"/>
</dbReference>
<dbReference type="HOGENOM" id="CLU_033361_2_1_1"/>
<dbReference type="InParanoid" id="Q6FTJ2"/>
<dbReference type="Proteomes" id="UP000002428">
    <property type="component" value="Chromosome G"/>
</dbReference>
<dbReference type="GO" id="GO:0022625">
    <property type="term" value="C:cytosolic large ribosomal subunit"/>
    <property type="evidence" value="ECO:0007669"/>
    <property type="project" value="TreeGrafter"/>
</dbReference>
<dbReference type="GO" id="GO:0062040">
    <property type="term" value="C:fungal biofilm matrix"/>
    <property type="evidence" value="ECO:0000314"/>
    <property type="project" value="CGD"/>
</dbReference>
<dbReference type="GO" id="GO:0003723">
    <property type="term" value="F:RNA binding"/>
    <property type="evidence" value="ECO:0007669"/>
    <property type="project" value="TreeGrafter"/>
</dbReference>
<dbReference type="GO" id="GO:0003735">
    <property type="term" value="F:structural constituent of ribosome"/>
    <property type="evidence" value="ECO:0007669"/>
    <property type="project" value="InterPro"/>
</dbReference>
<dbReference type="GO" id="GO:0006412">
    <property type="term" value="P:translation"/>
    <property type="evidence" value="ECO:0007669"/>
    <property type="project" value="InterPro"/>
</dbReference>
<dbReference type="FunFam" id="2.40.30.10:FF:000079">
    <property type="entry name" value="60S ribosomal protein L3"/>
    <property type="match status" value="1"/>
</dbReference>
<dbReference type="FunFam" id="3.30.1430.10:FF:000001">
    <property type="entry name" value="60S ribosomal protein L3"/>
    <property type="match status" value="1"/>
</dbReference>
<dbReference type="FunFam" id="4.10.960.10:FF:000002">
    <property type="entry name" value="60S ribosomal protein L3"/>
    <property type="match status" value="1"/>
</dbReference>
<dbReference type="FunFam" id="2.40.30.10:FF:000351">
    <property type="entry name" value="Ribosomal protein L3"/>
    <property type="match status" value="1"/>
</dbReference>
<dbReference type="Gene3D" id="3.30.1430.10">
    <property type="match status" value="1"/>
</dbReference>
<dbReference type="Gene3D" id="4.10.960.10">
    <property type="entry name" value="Ribosomal protein L3, domain 3"/>
    <property type="match status" value="1"/>
</dbReference>
<dbReference type="Gene3D" id="2.40.30.10">
    <property type="entry name" value="Translation factors"/>
    <property type="match status" value="1"/>
</dbReference>
<dbReference type="InterPro" id="IPR045077">
    <property type="entry name" value="L3_arc_euk"/>
</dbReference>
<dbReference type="InterPro" id="IPR044892">
    <property type="entry name" value="Ribosomal_L3_dom_3_arc_sf"/>
</dbReference>
<dbReference type="InterPro" id="IPR000597">
    <property type="entry name" value="Ribosomal_uL3"/>
</dbReference>
<dbReference type="InterPro" id="IPR019926">
    <property type="entry name" value="Ribosomal_uL3_CS"/>
</dbReference>
<dbReference type="InterPro" id="IPR009000">
    <property type="entry name" value="Transl_B-barrel_sf"/>
</dbReference>
<dbReference type="PANTHER" id="PTHR11363">
    <property type="entry name" value="60S RIBOSOMAL PROTEIN L3-RELATED"/>
    <property type="match status" value="1"/>
</dbReference>
<dbReference type="PANTHER" id="PTHR11363:SF5">
    <property type="entry name" value="LARGE RIBOSOMAL SUBUNIT PROTEIN UL3"/>
    <property type="match status" value="1"/>
</dbReference>
<dbReference type="Pfam" id="PF00297">
    <property type="entry name" value="Ribosomal_L3"/>
    <property type="match status" value="1"/>
</dbReference>
<dbReference type="SUPFAM" id="SSF50447">
    <property type="entry name" value="Translation proteins"/>
    <property type="match status" value="1"/>
</dbReference>
<dbReference type="PROSITE" id="PS00474">
    <property type="entry name" value="RIBOSOMAL_L3"/>
    <property type="match status" value="1"/>
</dbReference>
<feature type="chain" id="PRO_0000077245" description="Large ribosomal subunit protein uL3">
    <location>
        <begin position="1"/>
        <end position="387"/>
    </location>
</feature>
<name>RL3_CANGA</name>
<reference key="1">
    <citation type="journal article" date="2004" name="Nature">
        <title>Genome evolution in yeasts.</title>
        <authorList>
            <person name="Dujon B."/>
            <person name="Sherman D."/>
            <person name="Fischer G."/>
            <person name="Durrens P."/>
            <person name="Casaregola S."/>
            <person name="Lafontaine I."/>
            <person name="de Montigny J."/>
            <person name="Marck C."/>
            <person name="Neuveglise C."/>
            <person name="Talla E."/>
            <person name="Goffard N."/>
            <person name="Frangeul L."/>
            <person name="Aigle M."/>
            <person name="Anthouard V."/>
            <person name="Babour A."/>
            <person name="Barbe V."/>
            <person name="Barnay S."/>
            <person name="Blanchin S."/>
            <person name="Beckerich J.-M."/>
            <person name="Beyne E."/>
            <person name="Bleykasten C."/>
            <person name="Boisrame A."/>
            <person name="Boyer J."/>
            <person name="Cattolico L."/>
            <person name="Confanioleri F."/>
            <person name="de Daruvar A."/>
            <person name="Despons L."/>
            <person name="Fabre E."/>
            <person name="Fairhead C."/>
            <person name="Ferry-Dumazet H."/>
            <person name="Groppi A."/>
            <person name="Hantraye F."/>
            <person name="Hennequin C."/>
            <person name="Jauniaux N."/>
            <person name="Joyet P."/>
            <person name="Kachouri R."/>
            <person name="Kerrest A."/>
            <person name="Koszul R."/>
            <person name="Lemaire M."/>
            <person name="Lesur I."/>
            <person name="Ma L."/>
            <person name="Muller H."/>
            <person name="Nicaud J.-M."/>
            <person name="Nikolski M."/>
            <person name="Oztas S."/>
            <person name="Ozier-Kalogeropoulos O."/>
            <person name="Pellenz S."/>
            <person name="Potier S."/>
            <person name="Richard G.-F."/>
            <person name="Straub M.-L."/>
            <person name="Suleau A."/>
            <person name="Swennen D."/>
            <person name="Tekaia F."/>
            <person name="Wesolowski-Louvel M."/>
            <person name="Westhof E."/>
            <person name="Wirth B."/>
            <person name="Zeniou-Meyer M."/>
            <person name="Zivanovic Y."/>
            <person name="Bolotin-Fukuhara M."/>
            <person name="Thierry A."/>
            <person name="Bouchier C."/>
            <person name="Caudron B."/>
            <person name="Scarpelli C."/>
            <person name="Gaillardin C."/>
            <person name="Weissenbach J."/>
            <person name="Wincker P."/>
            <person name="Souciet J.-L."/>
        </authorList>
    </citation>
    <scope>NUCLEOTIDE SEQUENCE [LARGE SCALE GENOMIC DNA]</scope>
    <source>
        <strain>ATCC 2001 / BCRC 20586 / JCM 3761 / NBRC 0622 / NRRL Y-65 / CBS 138</strain>
    </source>
</reference>
<protein>
    <recommendedName>
        <fullName evidence="2">Large ribosomal subunit protein uL3</fullName>
    </recommendedName>
    <alternativeName>
        <fullName>60S ribosomal protein L3</fullName>
    </alternativeName>
</protein>
<comment type="subcellular location">
    <subcellularLocation>
        <location evidence="1">Cytoplasm</location>
    </subcellularLocation>
</comment>
<comment type="similarity">
    <text evidence="2">Belongs to the universal ribosomal protein uL3 family.</text>
</comment>
<proteinExistence type="inferred from homology"/>
<gene>
    <name type="primary">RPL3</name>
    <name type="ordered locus">CAGL0G02079g</name>
</gene>
<sequence>MSHRKYEAPRHGHLGFLPRKRAASVRGRVKSFPKDDKSKPVALTSFLGYKAGMTTIVRDLDRPGSKFHKREIVEAVTVVDTPPVVVVGVVGYVETPRGLRSLTTVWAEHLSDEVKRRFYKNWYKSKKKAFTKYSAKYAQNGAEIERELARIKKYATVVRVLVHTQVRKTPLVQKKAHLAEIQLNGGSISEKVDWAREHFEKTVSVDSVFEQNEMIDAIAVTKGHGFEGVTHRWGTKKLPRKTHRGLRKVACIGAWHPAHVMWSVARAGQRGYHHRTSINHKIYRIGKGDDEGNAATNFDRTKKTINPMGGFVHYGMVNNDFVMVKGSIPGCKKRVVTLRKSLYTNTSRKAVEEVTLKWIDTASKFGKGRFQTPAEKHAFMGTLKKDL</sequence>